<keyword id="KW-0903">Direct protein sequencing</keyword>
<keyword id="KW-1015">Disulfide bond</keyword>
<keyword id="KW-0325">Glycoprotein</keyword>
<keyword id="KW-0406">Ion transport</keyword>
<keyword id="KW-0408">Iron</keyword>
<keyword id="KW-0410">Iron transport</keyword>
<keyword id="KW-0479">Metal-binding</keyword>
<keyword id="KW-0677">Repeat</keyword>
<keyword id="KW-0964">Secreted</keyword>
<keyword id="KW-0732">Signal</keyword>
<keyword id="KW-0813">Transport</keyword>
<dbReference type="EMBL" id="L05340">
    <property type="protein sequence ID" value="AAA27820.1"/>
    <property type="molecule type" value="mRNA"/>
</dbReference>
<dbReference type="PIR" id="A47275">
    <property type="entry name" value="A47275"/>
</dbReference>
<dbReference type="SMR" id="Q02942"/>
<dbReference type="MEROPS" id="S60.973"/>
<dbReference type="GO" id="GO:0005769">
    <property type="term" value="C:early endosome"/>
    <property type="evidence" value="ECO:0007669"/>
    <property type="project" value="TreeGrafter"/>
</dbReference>
<dbReference type="GO" id="GO:0005615">
    <property type="term" value="C:extracellular space"/>
    <property type="evidence" value="ECO:0007669"/>
    <property type="project" value="InterPro"/>
</dbReference>
<dbReference type="GO" id="GO:0005886">
    <property type="term" value="C:plasma membrane"/>
    <property type="evidence" value="ECO:0007669"/>
    <property type="project" value="TreeGrafter"/>
</dbReference>
<dbReference type="GO" id="GO:0055037">
    <property type="term" value="C:recycling endosome"/>
    <property type="evidence" value="ECO:0007669"/>
    <property type="project" value="TreeGrafter"/>
</dbReference>
<dbReference type="GO" id="GO:0046872">
    <property type="term" value="F:metal ion binding"/>
    <property type="evidence" value="ECO:0007669"/>
    <property type="project" value="UniProtKB-KW"/>
</dbReference>
<dbReference type="GO" id="GO:0006826">
    <property type="term" value="P:iron ion transport"/>
    <property type="evidence" value="ECO:0007669"/>
    <property type="project" value="UniProtKB-KW"/>
</dbReference>
<dbReference type="CDD" id="cd13529">
    <property type="entry name" value="PBP2_transferrin"/>
    <property type="match status" value="2"/>
</dbReference>
<dbReference type="FunFam" id="3.40.190.10:FF:000095">
    <property type="entry name" value="Lactotransferrin"/>
    <property type="match status" value="1"/>
</dbReference>
<dbReference type="Gene3D" id="3.40.190.10">
    <property type="entry name" value="Periplasmic binding protein-like II"/>
    <property type="match status" value="4"/>
</dbReference>
<dbReference type="InterPro" id="IPR016357">
    <property type="entry name" value="Transferrin"/>
</dbReference>
<dbReference type="InterPro" id="IPR001156">
    <property type="entry name" value="Transferrin-like_dom"/>
</dbReference>
<dbReference type="InterPro" id="IPR018195">
    <property type="entry name" value="Transferrin_Fe_BS"/>
</dbReference>
<dbReference type="PANTHER" id="PTHR11485">
    <property type="entry name" value="TRANSFERRIN"/>
    <property type="match status" value="1"/>
</dbReference>
<dbReference type="PANTHER" id="PTHR11485:SF57">
    <property type="entry name" value="TRANSFERRIN"/>
    <property type="match status" value="1"/>
</dbReference>
<dbReference type="Pfam" id="PF00405">
    <property type="entry name" value="Transferrin"/>
    <property type="match status" value="2"/>
</dbReference>
<dbReference type="PIRSF" id="PIRSF002549">
    <property type="entry name" value="Transferrin"/>
    <property type="match status" value="1"/>
</dbReference>
<dbReference type="PRINTS" id="PR00422">
    <property type="entry name" value="TRANSFERRIN"/>
</dbReference>
<dbReference type="SMART" id="SM00094">
    <property type="entry name" value="TR_FER"/>
    <property type="match status" value="2"/>
</dbReference>
<dbReference type="SUPFAM" id="SSF53850">
    <property type="entry name" value="Periplasmic binding protein-like II"/>
    <property type="match status" value="2"/>
</dbReference>
<dbReference type="PROSITE" id="PS00205">
    <property type="entry name" value="TRANSFERRIN_LIKE_1"/>
    <property type="match status" value="2"/>
</dbReference>
<dbReference type="PROSITE" id="PS00206">
    <property type="entry name" value="TRANSFERRIN_LIKE_2"/>
    <property type="match status" value="2"/>
</dbReference>
<dbReference type="PROSITE" id="PS00207">
    <property type="entry name" value="TRANSFERRIN_LIKE_3"/>
    <property type="match status" value="2"/>
</dbReference>
<dbReference type="PROSITE" id="PS51408">
    <property type="entry name" value="TRANSFERRIN_LIKE_4"/>
    <property type="match status" value="2"/>
</dbReference>
<evidence type="ECO:0000255" key="1"/>
<evidence type="ECO:0000255" key="2">
    <source>
        <dbReference type="PROSITE-ProRule" id="PRU00741"/>
    </source>
</evidence>
<evidence type="ECO:0000269" key="3">
    <source>
    </source>
</evidence>
<proteinExistence type="evidence at protein level"/>
<accession>Q02942</accession>
<sequence>MLLCLTLLFSASAVLAMPTPEGSPHHEIYKVCVPEGALESCHRMSQESDLHMTCVAARDRIECLDKIKHREADFAPVDPEDMYVAAKIPQQDFIIFKEIRTKEEPDEEFRYEAVCVIHKDLDITSIHGLQGLKSCHTGVGRNVGYKIPITKLRHMGVLGPLNNSDLTPRENELHALSHLFSEACLVGKWAPDPAQNQALKAKYPNLCALCEHPEICDYPDKYSGYDGALRCLAEHGGQVAWTKVYYVKKHFGMAIGAGEAVPTGQNPDDYAYLCPDATKKPITGKPCIWAARPWQGYMANHDLDNDIADLRAKISLADTIGETENADWLSKVLDLNNKTIPIDNQGPYSPENYLNKANYTDVIERDTGAPHRPVRFCVTSDAELEKCRVLKRAAYSRDIRPAFDCVREAGLHECLRTVRDDGADVITLDGGEVFVAQRQYNLKPIVAEQYGEHGSLYYAVAVVRKDSTYQSIEDLRGAKSCHTGYGRNAGWNVPLYTLLSKELISKNSCPYSSALSSYFSGGSCVPGAQLPENNPANQNPDSLCSICAGNLDAPNNDPAWKCSASNDESFFGYSGAFRCLASGEGQVAFVKHTTVPENTDGHNQAAWTAGLRSEDFELLCADGGRASINEYSRCHLAEVPPHMVVTSNDKTDIQLNEIRHAILAAGDLYSRRPDLFKLFGDFGGTKDLLFKNSATGLLSVENGSPLMQRYSEILEVIRACENQPTP</sequence>
<organism>
    <name type="scientific">Blaberus discoidalis</name>
    <name type="common">Tropical cockroach</name>
    <dbReference type="NCBI Taxonomy" id="6981"/>
    <lineage>
        <taxon>Eukaryota</taxon>
        <taxon>Metazoa</taxon>
        <taxon>Ecdysozoa</taxon>
        <taxon>Arthropoda</taxon>
        <taxon>Hexapoda</taxon>
        <taxon>Insecta</taxon>
        <taxon>Pterygota</taxon>
        <taxon>Neoptera</taxon>
        <taxon>Polyneoptera</taxon>
        <taxon>Dictyoptera</taxon>
        <taxon>Blattodea</taxon>
        <taxon>Blaberoidea</taxon>
        <taxon>Blaberidae</taxon>
        <taxon>Blaberinae</taxon>
        <taxon>Blaberus</taxon>
    </lineage>
</organism>
<comment type="function">
    <text>Transferrins are iron binding transport proteins which bind Fe(3+) ion in association with the binding of an anion, usually bicarbonate.</text>
</comment>
<comment type="subcellular location">
    <subcellularLocation>
        <location>Secreted</location>
    </subcellularLocation>
</comment>
<comment type="similarity">
    <text evidence="2">Belongs to the transferrin family.</text>
</comment>
<protein>
    <recommendedName>
        <fullName>Transferrin</fullName>
    </recommendedName>
</protein>
<name>TRF_BLADI</name>
<reference key="1">
    <citation type="journal article" date="1993" name="Proc. Natl. Acad. Sci. U.S.A.">
        <title>Transferrin in a cockroach: molecular cloning, characterization, and suppression by juvenile hormone.</title>
        <authorList>
            <person name="Jamroz R.C."/>
            <person name="Gasdaska J.R."/>
            <person name="Bradfield J.Y."/>
            <person name="Law J.H."/>
        </authorList>
    </citation>
    <scope>NUCLEOTIDE SEQUENCE [MRNA]</scope>
    <scope>PROTEIN SEQUENCE OF 17-31</scope>
    <source>
        <tissue>Fat body</tissue>
    </source>
</reference>
<feature type="signal peptide" evidence="3">
    <location>
        <begin position="1"/>
        <end position="16"/>
    </location>
</feature>
<feature type="chain" id="PRO_0000035746" description="Transferrin">
    <location>
        <begin position="17"/>
        <end position="726"/>
    </location>
</feature>
<feature type="domain" description="Transferrin-like 1" evidence="2">
    <location>
        <begin position="29"/>
        <end position="367"/>
    </location>
</feature>
<feature type="domain" description="Transferrin-like 2" evidence="2">
    <location>
        <begin position="374"/>
        <end position="719"/>
    </location>
</feature>
<feature type="binding site" evidence="2">
    <location>
        <position position="78"/>
    </location>
    <ligand>
        <name>Fe(3+)</name>
        <dbReference type="ChEBI" id="CHEBI:29034"/>
        <label>1</label>
    </ligand>
</feature>
<feature type="binding site" evidence="2">
    <location>
        <position position="111"/>
    </location>
    <ligand>
        <name>Fe(3+)</name>
        <dbReference type="ChEBI" id="CHEBI:29034"/>
        <label>1</label>
    </ligand>
</feature>
<feature type="binding site" evidence="2">
    <location>
        <position position="137"/>
    </location>
    <ligand>
        <name>hydrogencarbonate</name>
        <dbReference type="ChEBI" id="CHEBI:17544"/>
        <label>1</label>
    </ligand>
</feature>
<feature type="binding site" evidence="2">
    <location>
        <position position="141"/>
    </location>
    <ligand>
        <name>hydrogencarbonate</name>
        <dbReference type="ChEBI" id="CHEBI:17544"/>
        <label>1</label>
    </ligand>
</feature>
<feature type="binding site" evidence="2">
    <location>
        <position position="143"/>
    </location>
    <ligand>
        <name>hydrogencarbonate</name>
        <dbReference type="ChEBI" id="CHEBI:17544"/>
        <label>1</label>
    </ligand>
</feature>
<feature type="binding site" evidence="2">
    <location>
        <position position="144"/>
    </location>
    <ligand>
        <name>hydrogencarbonate</name>
        <dbReference type="ChEBI" id="CHEBI:17544"/>
        <label>1</label>
    </ligand>
</feature>
<feature type="binding site" evidence="2">
    <location>
        <position position="225"/>
    </location>
    <ligand>
        <name>Fe(3+)</name>
        <dbReference type="ChEBI" id="CHEBI:29034"/>
        <label>1</label>
    </ligand>
</feature>
<feature type="binding site" evidence="2">
    <location>
        <position position="429"/>
    </location>
    <ligand>
        <name>Fe(3+)</name>
        <dbReference type="ChEBI" id="CHEBI:29034"/>
        <label>2</label>
    </ligand>
</feature>
<feature type="binding site" evidence="2">
    <location>
        <position position="457"/>
    </location>
    <ligand>
        <name>Fe(3+)</name>
        <dbReference type="ChEBI" id="CHEBI:29034"/>
        <label>2</label>
    </ligand>
</feature>
<feature type="binding site" evidence="2">
    <location>
        <position position="483"/>
    </location>
    <ligand>
        <name>hydrogencarbonate</name>
        <dbReference type="ChEBI" id="CHEBI:17544"/>
        <label>2</label>
    </ligand>
</feature>
<feature type="binding site" evidence="2">
    <location>
        <position position="487"/>
    </location>
    <ligand>
        <name>hydrogencarbonate</name>
        <dbReference type="ChEBI" id="CHEBI:17544"/>
        <label>2</label>
    </ligand>
</feature>
<feature type="binding site" evidence="2">
    <location>
        <position position="489"/>
    </location>
    <ligand>
        <name>hydrogencarbonate</name>
        <dbReference type="ChEBI" id="CHEBI:17544"/>
        <label>2</label>
    </ligand>
</feature>
<feature type="binding site" evidence="2">
    <location>
        <position position="490"/>
    </location>
    <ligand>
        <name>hydrogencarbonate</name>
        <dbReference type="ChEBI" id="CHEBI:17544"/>
        <label>2</label>
    </ligand>
</feature>
<feature type="binding site" evidence="2">
    <location>
        <position position="573"/>
    </location>
    <ligand>
        <name>Fe(3+)</name>
        <dbReference type="ChEBI" id="CHEBI:29034"/>
        <label>2</label>
    </ligand>
</feature>
<feature type="binding site" evidence="2">
    <location>
        <position position="642"/>
    </location>
    <ligand>
        <name>Fe(3+)</name>
        <dbReference type="ChEBI" id="CHEBI:29034"/>
        <label>2</label>
    </ligand>
</feature>
<feature type="glycosylation site" description="N-linked (GlcNAc...) asparagine" evidence="1">
    <location>
        <position position="162"/>
    </location>
</feature>
<feature type="glycosylation site" description="N-linked (GlcNAc...) asparagine" evidence="1">
    <location>
        <position position="337"/>
    </location>
</feature>
<feature type="glycosylation site" description="N-linked (GlcNAc...) asparagine" evidence="1">
    <location>
        <position position="358"/>
    </location>
</feature>
<feature type="disulfide bond" evidence="2">
    <location>
        <begin position="32"/>
        <end position="63"/>
    </location>
</feature>
<feature type="disulfide bond" evidence="2">
    <location>
        <begin position="41"/>
        <end position="54"/>
    </location>
</feature>
<feature type="disulfide bond" evidence="2">
    <location>
        <begin position="135"/>
        <end position="231"/>
    </location>
</feature>
<feature type="disulfide bond" evidence="2">
    <location>
        <begin position="184"/>
        <end position="210"/>
    </location>
</feature>
<feature type="disulfide bond" evidence="2">
    <location>
        <begin position="207"/>
        <end position="216"/>
    </location>
</feature>
<feature type="disulfide bond" evidence="2">
    <location>
        <begin position="274"/>
        <end position="287"/>
    </location>
</feature>
<feature type="disulfide bond" evidence="2">
    <location>
        <begin position="377"/>
        <end position="414"/>
    </location>
</feature>
<feature type="disulfide bond" evidence="2">
    <location>
        <begin position="387"/>
        <end position="405"/>
    </location>
</feature>
<feature type="disulfide bond" evidence="2">
    <location>
        <begin position="481"/>
        <end position="562"/>
    </location>
</feature>